<evidence type="ECO:0000255" key="1">
    <source>
        <dbReference type="HAMAP-Rule" id="MF_00125"/>
    </source>
</evidence>
<gene>
    <name evidence="1" type="primary">hisZ</name>
    <name type="ordered locus">cce_2783</name>
</gene>
<name>HISZ_CROS5</name>
<reference key="1">
    <citation type="journal article" date="2008" name="Proc. Natl. Acad. Sci. U.S.A.">
        <title>The genome of Cyanothece 51142, a unicellular diazotrophic cyanobacterium important in the marine nitrogen cycle.</title>
        <authorList>
            <person name="Welsh E.A."/>
            <person name="Liberton M."/>
            <person name="Stoeckel J."/>
            <person name="Loh T."/>
            <person name="Elvitigala T."/>
            <person name="Wang C."/>
            <person name="Wollam A."/>
            <person name="Fulton R.S."/>
            <person name="Clifton S.W."/>
            <person name="Jacobs J.M."/>
            <person name="Aurora R."/>
            <person name="Ghosh B.K."/>
            <person name="Sherman L.A."/>
            <person name="Smith R.D."/>
            <person name="Wilson R.K."/>
            <person name="Pakrasi H.B."/>
        </authorList>
    </citation>
    <scope>NUCLEOTIDE SEQUENCE [LARGE SCALE GENOMIC DNA]</scope>
    <source>
        <strain>ATCC 51142 / BH68</strain>
    </source>
</reference>
<protein>
    <recommendedName>
        <fullName evidence="1">ATP phosphoribosyltransferase regulatory subunit</fullName>
    </recommendedName>
</protein>
<sequence>MIHQPPAGARDLLPLEVVQKAWINDTLQQVFGQWGYQRIVTSTIERLDTLKAGGAIEDETVIQLHNNSREQLGLRPELTASVARAAVTRMANTSYPQRLCYRANVFRNPPSGHHGRQLEFYQAGVELLFSGGTLADAEILLLVAECLQKLQIPSWYLILGDAGLTRSLLSPFPEALRQEVRHCLATLDYVKLDNLSYPNEELKHRASLLFNLRGKPEDVLSKVVDLTLDQTGKHCLNNLKSLIELVNHSTSYKLPLTLDLSLIQTFDYYTGIIFKAIGQTNHKLQNLGQGGRYDQLLGVYHPQKKSAPGIGFSLNVGALHRCLLSTDILPQKPLLIDYLVVAKTSESQIEALKYAQQLRKDDNSLRVTIDLENRNEEEIKKYAQENGIKTIVWIEKGKEAIIN</sequence>
<proteinExistence type="inferred from homology"/>
<feature type="chain" id="PRO_1000095457" description="ATP phosphoribosyltransferase regulatory subunit">
    <location>
        <begin position="1"/>
        <end position="403"/>
    </location>
</feature>
<dbReference type="EMBL" id="CP000806">
    <property type="protein sequence ID" value="ACB52131.1"/>
    <property type="molecule type" value="Genomic_DNA"/>
</dbReference>
<dbReference type="RefSeq" id="WP_009544532.1">
    <property type="nucleotide sequence ID" value="NC_010546.1"/>
</dbReference>
<dbReference type="SMR" id="B1WU69"/>
<dbReference type="STRING" id="43989.cce_2783"/>
<dbReference type="KEGG" id="cyt:cce_2783"/>
<dbReference type="eggNOG" id="COG3705">
    <property type="taxonomic scope" value="Bacteria"/>
</dbReference>
<dbReference type="HOGENOM" id="CLU_025113_0_2_3"/>
<dbReference type="OrthoDB" id="9800814at2"/>
<dbReference type="UniPathway" id="UPA00031">
    <property type="reaction ID" value="UER00006"/>
</dbReference>
<dbReference type="Proteomes" id="UP000001203">
    <property type="component" value="Chromosome circular"/>
</dbReference>
<dbReference type="GO" id="GO:0005737">
    <property type="term" value="C:cytoplasm"/>
    <property type="evidence" value="ECO:0007669"/>
    <property type="project" value="UniProtKB-SubCell"/>
</dbReference>
<dbReference type="GO" id="GO:0004821">
    <property type="term" value="F:histidine-tRNA ligase activity"/>
    <property type="evidence" value="ECO:0007669"/>
    <property type="project" value="TreeGrafter"/>
</dbReference>
<dbReference type="GO" id="GO:0006427">
    <property type="term" value="P:histidyl-tRNA aminoacylation"/>
    <property type="evidence" value="ECO:0007669"/>
    <property type="project" value="TreeGrafter"/>
</dbReference>
<dbReference type="GO" id="GO:0000105">
    <property type="term" value="P:L-histidine biosynthetic process"/>
    <property type="evidence" value="ECO:0007669"/>
    <property type="project" value="UniProtKB-UniRule"/>
</dbReference>
<dbReference type="CDD" id="cd00773">
    <property type="entry name" value="HisRS-like_core"/>
    <property type="match status" value="1"/>
</dbReference>
<dbReference type="Gene3D" id="3.30.930.10">
    <property type="entry name" value="Bira Bifunctional Protein, Domain 2"/>
    <property type="match status" value="1"/>
</dbReference>
<dbReference type="HAMAP" id="MF_00125">
    <property type="entry name" value="HisZ"/>
    <property type="match status" value="1"/>
</dbReference>
<dbReference type="InterPro" id="IPR045864">
    <property type="entry name" value="aa-tRNA-synth_II/BPL/LPL"/>
</dbReference>
<dbReference type="InterPro" id="IPR041715">
    <property type="entry name" value="HisRS-like_core"/>
</dbReference>
<dbReference type="InterPro" id="IPR004516">
    <property type="entry name" value="HisRS/HisZ"/>
</dbReference>
<dbReference type="InterPro" id="IPR004517">
    <property type="entry name" value="HisZ"/>
</dbReference>
<dbReference type="NCBIfam" id="TIGR00443">
    <property type="entry name" value="hisZ_biosyn_reg"/>
    <property type="match status" value="1"/>
</dbReference>
<dbReference type="NCBIfam" id="NF008940">
    <property type="entry name" value="PRK12292.2-3"/>
    <property type="match status" value="1"/>
</dbReference>
<dbReference type="PANTHER" id="PTHR43707:SF1">
    <property type="entry name" value="HISTIDINE--TRNA LIGASE, MITOCHONDRIAL-RELATED"/>
    <property type="match status" value="1"/>
</dbReference>
<dbReference type="PANTHER" id="PTHR43707">
    <property type="entry name" value="HISTIDYL-TRNA SYNTHETASE"/>
    <property type="match status" value="1"/>
</dbReference>
<dbReference type="Pfam" id="PF13393">
    <property type="entry name" value="tRNA-synt_His"/>
    <property type="match status" value="1"/>
</dbReference>
<dbReference type="PIRSF" id="PIRSF001549">
    <property type="entry name" value="His-tRNA_synth"/>
    <property type="match status" value="1"/>
</dbReference>
<dbReference type="SUPFAM" id="SSF55681">
    <property type="entry name" value="Class II aaRS and biotin synthetases"/>
    <property type="match status" value="1"/>
</dbReference>
<comment type="function">
    <text evidence="1">Required for the first step of histidine biosynthesis. May allow the feedback regulation of ATP phosphoribosyltransferase activity by histidine.</text>
</comment>
<comment type="pathway">
    <text evidence="1">Amino-acid biosynthesis; L-histidine biosynthesis; L-histidine from 5-phospho-alpha-D-ribose 1-diphosphate: step 1/9.</text>
</comment>
<comment type="subunit">
    <text evidence="1">Heteromultimer composed of HisG and HisZ subunits.</text>
</comment>
<comment type="subcellular location">
    <subcellularLocation>
        <location evidence="1">Cytoplasm</location>
    </subcellularLocation>
</comment>
<comment type="miscellaneous">
    <text>This function is generally fulfilled by the C-terminal part of HisG, which is missing in some bacteria such as this one.</text>
</comment>
<comment type="similarity">
    <text evidence="1">Belongs to the class-II aminoacyl-tRNA synthetase family. HisZ subfamily.</text>
</comment>
<organism>
    <name type="scientific">Crocosphaera subtropica (strain ATCC 51142 / BH68)</name>
    <name type="common">Cyanothece sp. (strain ATCC 51142)</name>
    <dbReference type="NCBI Taxonomy" id="43989"/>
    <lineage>
        <taxon>Bacteria</taxon>
        <taxon>Bacillati</taxon>
        <taxon>Cyanobacteriota</taxon>
        <taxon>Cyanophyceae</taxon>
        <taxon>Oscillatoriophycideae</taxon>
        <taxon>Chroococcales</taxon>
        <taxon>Aphanothecaceae</taxon>
        <taxon>Crocosphaera</taxon>
        <taxon>Crocosphaera subtropica</taxon>
    </lineage>
</organism>
<keyword id="KW-0028">Amino-acid biosynthesis</keyword>
<keyword id="KW-0963">Cytoplasm</keyword>
<keyword id="KW-0368">Histidine biosynthesis</keyword>
<keyword id="KW-1185">Reference proteome</keyword>
<accession>B1WU69</accession>